<proteinExistence type="evidence at transcript level"/>
<keyword id="KW-0007">Acetylation</keyword>
<keyword id="KW-0053">Apoptosis</keyword>
<keyword id="KW-0507">mRNA processing</keyword>
<keyword id="KW-0508">mRNA splicing</keyword>
<keyword id="KW-0539">Nucleus</keyword>
<keyword id="KW-0597">Phosphoprotein</keyword>
<keyword id="KW-1185">Reference proteome</keyword>
<keyword id="KW-0747">Spliceosome</keyword>
<feature type="chain" id="PRO_0000347222" description="Survival of motor neuron-related-splicing factor 30">
    <location>
        <begin position="1"/>
        <end position="238"/>
    </location>
</feature>
<feature type="domain" description="Tudor" evidence="3">
    <location>
        <begin position="72"/>
        <end position="132"/>
    </location>
</feature>
<feature type="short sequence motif" description="Nuclear localization signal" evidence="2">
    <location>
        <begin position="142"/>
        <end position="160"/>
    </location>
</feature>
<feature type="modified residue" description="Phosphoserine" evidence="1">
    <location>
        <position position="201"/>
    </location>
</feature>
<feature type="modified residue" description="N6-acetyllysine" evidence="1">
    <location>
        <position position="219"/>
    </location>
</feature>
<sequence length="238" mass="26762">MPEDLAKQLASYKAQLQQVEAALSGNGENEDLLKLKKDLQEVIELTKDLLSTQPSETLASSDNFASTQPTHSWKVGDKCMAIWSEDGQCYEAEIEEIDEENGTAAITFAGYGNAEVTPLLNLKPVEEGRKAKEDSGNKPMSKKEMIAQQREYKKKKALKKAQRIKELEQEREDQKVKWQQFNNRAYSKNKKGQVKRSIFASPESVTGKVGVGTCGIADKPMTQYQDTSKYNVRHLMPQ</sequence>
<reference key="1">
    <citation type="submission" date="2005-08" db="EMBL/GenBank/DDBJ databases">
        <authorList>
            <consortium name="NIH - Mammalian Gene Collection (MGC) project"/>
        </authorList>
    </citation>
    <scope>NUCLEOTIDE SEQUENCE [LARGE SCALE MRNA]</scope>
    <source>
        <strain>Hereford</strain>
        <tissue>Testis</tissue>
    </source>
</reference>
<comment type="function">
    <text evidence="1">Involved in spliceosome assembly (By similarity).</text>
</comment>
<comment type="subunit">
    <text evidence="1">Associates with spliceosomes. Associates with U4/U5/U6 tri-snRNP and with U2 snRNP (By similarity).</text>
</comment>
<comment type="subcellular location">
    <subcellularLocation>
        <location evidence="1">Nucleus speckle</location>
    </subcellularLocation>
    <subcellularLocation>
        <location evidence="1">Nucleus</location>
        <location evidence="1">Cajal body</location>
    </subcellularLocation>
    <text evidence="1">Detected in nuclear speckles containing snRNP and in Cajal (coiled) bodies.</text>
</comment>
<comment type="domain">
    <text evidence="1">The Tudor domain mediates association with dimethylarginines, which are common in snRNP proteins.</text>
</comment>
<comment type="similarity">
    <text evidence="4">Belongs to the SMN family.</text>
</comment>
<protein>
    <recommendedName>
        <fullName>Survival of motor neuron-related-splicing factor 30</fullName>
    </recommendedName>
    <alternativeName>
        <fullName>Survival motor neuron domain-containing protein 1</fullName>
    </alternativeName>
</protein>
<gene>
    <name type="primary">SMNDC1</name>
    <name type="synonym">SPF30</name>
</gene>
<name>SPF30_BOVIN</name>
<organism>
    <name type="scientific">Bos taurus</name>
    <name type="common">Bovine</name>
    <dbReference type="NCBI Taxonomy" id="9913"/>
    <lineage>
        <taxon>Eukaryota</taxon>
        <taxon>Metazoa</taxon>
        <taxon>Chordata</taxon>
        <taxon>Craniata</taxon>
        <taxon>Vertebrata</taxon>
        <taxon>Euteleostomi</taxon>
        <taxon>Mammalia</taxon>
        <taxon>Eutheria</taxon>
        <taxon>Laurasiatheria</taxon>
        <taxon>Artiodactyla</taxon>
        <taxon>Ruminantia</taxon>
        <taxon>Pecora</taxon>
        <taxon>Bovidae</taxon>
        <taxon>Bovinae</taxon>
        <taxon>Bos</taxon>
    </lineage>
</organism>
<accession>Q3T045</accession>
<evidence type="ECO:0000250" key="1">
    <source>
        <dbReference type="UniProtKB" id="O75940"/>
    </source>
</evidence>
<evidence type="ECO:0000255" key="2"/>
<evidence type="ECO:0000255" key="3">
    <source>
        <dbReference type="PROSITE-ProRule" id="PRU00211"/>
    </source>
</evidence>
<evidence type="ECO:0000305" key="4"/>
<dbReference type="EMBL" id="BC102568">
    <property type="protein sequence ID" value="AAI02569.1"/>
    <property type="molecule type" value="mRNA"/>
</dbReference>
<dbReference type="RefSeq" id="NP_001030414.1">
    <property type="nucleotide sequence ID" value="NM_001035337.1"/>
</dbReference>
<dbReference type="BMRB" id="Q3T045"/>
<dbReference type="SMR" id="Q3T045"/>
<dbReference type="FunCoup" id="Q3T045">
    <property type="interactions" value="3228"/>
</dbReference>
<dbReference type="STRING" id="9913.ENSBTAP00000000722"/>
<dbReference type="PaxDb" id="9913-ENSBTAP00000000722"/>
<dbReference type="PeptideAtlas" id="Q3T045"/>
<dbReference type="GeneID" id="520500"/>
<dbReference type="KEGG" id="bta:520500"/>
<dbReference type="CTD" id="10285"/>
<dbReference type="eggNOG" id="KOG3026">
    <property type="taxonomic scope" value="Eukaryota"/>
</dbReference>
<dbReference type="InParanoid" id="Q3T045"/>
<dbReference type="OrthoDB" id="79171at2759"/>
<dbReference type="Proteomes" id="UP000009136">
    <property type="component" value="Unplaced"/>
</dbReference>
<dbReference type="GO" id="GO:0015030">
    <property type="term" value="C:Cajal body"/>
    <property type="evidence" value="ECO:0007669"/>
    <property type="project" value="UniProtKB-SubCell"/>
</dbReference>
<dbReference type="GO" id="GO:0005737">
    <property type="term" value="C:cytoplasm"/>
    <property type="evidence" value="ECO:0007669"/>
    <property type="project" value="InterPro"/>
</dbReference>
<dbReference type="GO" id="GO:0016607">
    <property type="term" value="C:nuclear speck"/>
    <property type="evidence" value="ECO:0007669"/>
    <property type="project" value="UniProtKB-SubCell"/>
</dbReference>
<dbReference type="GO" id="GO:0005634">
    <property type="term" value="C:nucleus"/>
    <property type="evidence" value="ECO:0000318"/>
    <property type="project" value="GO_Central"/>
</dbReference>
<dbReference type="GO" id="GO:0005681">
    <property type="term" value="C:spliceosomal complex"/>
    <property type="evidence" value="ECO:0007669"/>
    <property type="project" value="UniProtKB-KW"/>
</dbReference>
<dbReference type="GO" id="GO:0003723">
    <property type="term" value="F:RNA binding"/>
    <property type="evidence" value="ECO:0007669"/>
    <property type="project" value="InterPro"/>
</dbReference>
<dbReference type="GO" id="GO:0006915">
    <property type="term" value="P:apoptotic process"/>
    <property type="evidence" value="ECO:0007669"/>
    <property type="project" value="UniProtKB-KW"/>
</dbReference>
<dbReference type="GO" id="GO:0006397">
    <property type="term" value="P:mRNA processing"/>
    <property type="evidence" value="ECO:0007669"/>
    <property type="project" value="UniProtKB-KW"/>
</dbReference>
<dbReference type="GO" id="GO:0008380">
    <property type="term" value="P:RNA splicing"/>
    <property type="evidence" value="ECO:0007669"/>
    <property type="project" value="UniProtKB-KW"/>
</dbReference>
<dbReference type="CDD" id="cd20399">
    <property type="entry name" value="Tudor_SPF30"/>
    <property type="match status" value="1"/>
</dbReference>
<dbReference type="FunFam" id="2.30.30.140:FF:000038">
    <property type="entry name" value="Survival of motor neuron-related-splicing factor 30"/>
    <property type="match status" value="1"/>
</dbReference>
<dbReference type="Gene3D" id="2.30.30.140">
    <property type="match status" value="1"/>
</dbReference>
<dbReference type="InterPro" id="IPR010304">
    <property type="entry name" value="SMN_Tudor"/>
</dbReference>
<dbReference type="InterPro" id="IPR002999">
    <property type="entry name" value="Tudor"/>
</dbReference>
<dbReference type="PANTHER" id="PTHR13681:SF26">
    <property type="entry name" value="SURVIVAL OF MOTOR NEURON-RELATED-SPLICING FACTOR 30"/>
    <property type="match status" value="1"/>
</dbReference>
<dbReference type="PANTHER" id="PTHR13681">
    <property type="entry name" value="SURVIVAL OF MOTOR NEURON-RELATED-SPLICING FACTOR 30-RELATED"/>
    <property type="match status" value="1"/>
</dbReference>
<dbReference type="Pfam" id="PF06003">
    <property type="entry name" value="SMN_Tudor"/>
    <property type="match status" value="1"/>
</dbReference>
<dbReference type="SMART" id="SM00333">
    <property type="entry name" value="TUDOR"/>
    <property type="match status" value="1"/>
</dbReference>
<dbReference type="SUPFAM" id="SSF63748">
    <property type="entry name" value="Tudor/PWWP/MBT"/>
    <property type="match status" value="1"/>
</dbReference>
<dbReference type="PROSITE" id="PS50304">
    <property type="entry name" value="TUDOR"/>
    <property type="match status" value="1"/>
</dbReference>